<accession>Q9CFJ0</accession>
<reference key="1">
    <citation type="journal article" date="2001" name="Genome Res.">
        <title>The complete genome sequence of the lactic acid bacterium Lactococcus lactis ssp. lactis IL1403.</title>
        <authorList>
            <person name="Bolotin A."/>
            <person name="Wincker P."/>
            <person name="Mauger S."/>
            <person name="Jaillon O."/>
            <person name="Malarme K."/>
            <person name="Weissenbach J."/>
            <person name="Ehrlich S.D."/>
            <person name="Sorokin A."/>
        </authorList>
    </citation>
    <scope>NUCLEOTIDE SEQUENCE [LARGE SCALE GENOMIC DNA]</scope>
    <source>
        <strain>IL1403</strain>
    </source>
</reference>
<sequence length="513" mass="56781">MSDTTLEKIIVLDYGSQYNQLIARRIREIGVFSELMSHKVTAKEIREINPIGIILSGGPNSVYDEGSFDIDPEIFELGLPVLGICYGMQLLSYKLGGMVEAAGEREYGVAPLQLTGKSALFAGTPEVQDVLMSHGDRVTAIPEGFHVVGTSPNSPFAAVENTERNLYGIQFHPEVRHSVHGTEMLRNFALNICGAKGNWSMENFIDMQIKNIREKVGDKKVLLGLSGGVDSSVVGVLLQRAIGDQLTSIFVDHGFLRKGEADQVMETLGGKFGLNIIKVDAQKRFMDKLVGLSDPETKRKIIGNEFVYVFDDEANKLEGVDFLAQGTLYTDVIESGTDTAQTIKSHHNVGGLPEDMQFQLIEPLNTLFKDEVRALGTQLGMPDEIVWRQPFPGPGLAIRVLGDLTEEKLETVRESDAILREEIAAAGLERDVWQYFTVNTDVKSVGVMGDQRTYDYTLAIRAITSIDGMTADFAQLPWDLLQKISKRIVNEVDHVNRIVYDITSKPPATVEWQ</sequence>
<name>GUAA_LACLA</name>
<organism>
    <name type="scientific">Lactococcus lactis subsp. lactis (strain IL1403)</name>
    <name type="common">Streptococcus lactis</name>
    <dbReference type="NCBI Taxonomy" id="272623"/>
    <lineage>
        <taxon>Bacteria</taxon>
        <taxon>Bacillati</taxon>
        <taxon>Bacillota</taxon>
        <taxon>Bacilli</taxon>
        <taxon>Lactobacillales</taxon>
        <taxon>Streptococcaceae</taxon>
        <taxon>Lactococcus</taxon>
    </lineage>
</organism>
<protein>
    <recommendedName>
        <fullName>GMP synthase [glutamine-hydrolyzing]</fullName>
        <ecNumber>6.3.5.2</ecNumber>
    </recommendedName>
    <alternativeName>
        <fullName>GMP synthetase</fullName>
    </alternativeName>
    <alternativeName>
        <fullName>Glutamine amidotransferase</fullName>
    </alternativeName>
</protein>
<evidence type="ECO:0000250" key="1"/>
<keyword id="KW-0067">ATP-binding</keyword>
<keyword id="KW-0315">Glutamine amidotransferase</keyword>
<keyword id="KW-0332">GMP biosynthesis</keyword>
<keyword id="KW-0436">Ligase</keyword>
<keyword id="KW-0547">Nucleotide-binding</keyword>
<keyword id="KW-0658">Purine biosynthesis</keyword>
<keyword id="KW-1185">Reference proteome</keyword>
<gene>
    <name type="primary">guaA</name>
    <name type="ordered locus">LL1486</name>
    <name type="ORF">L115968</name>
</gene>
<proteinExistence type="inferred from homology"/>
<dbReference type="EC" id="6.3.5.2"/>
<dbReference type="EMBL" id="AE005176">
    <property type="protein sequence ID" value="AAK05584.1"/>
    <property type="molecule type" value="Genomic_DNA"/>
</dbReference>
<dbReference type="PIR" id="F86810">
    <property type="entry name" value="F86810"/>
</dbReference>
<dbReference type="RefSeq" id="NP_267642.1">
    <property type="nucleotide sequence ID" value="NC_002662.1"/>
</dbReference>
<dbReference type="RefSeq" id="WP_003130105.1">
    <property type="nucleotide sequence ID" value="NC_002662.1"/>
</dbReference>
<dbReference type="SMR" id="Q9CFJ0"/>
<dbReference type="MEROPS" id="C26.957"/>
<dbReference type="PaxDb" id="272623-L115968"/>
<dbReference type="EnsemblBacteria" id="AAK05584">
    <property type="protein sequence ID" value="AAK05584"/>
    <property type="gene ID" value="L115968"/>
</dbReference>
<dbReference type="KEGG" id="lla:L115968"/>
<dbReference type="PATRIC" id="fig|272623.7.peg.1596"/>
<dbReference type="eggNOG" id="COG0518">
    <property type="taxonomic scope" value="Bacteria"/>
</dbReference>
<dbReference type="eggNOG" id="COG0519">
    <property type="taxonomic scope" value="Bacteria"/>
</dbReference>
<dbReference type="HOGENOM" id="CLU_014340_0_5_9"/>
<dbReference type="OrthoDB" id="9802219at2"/>
<dbReference type="UniPathway" id="UPA00189">
    <property type="reaction ID" value="UER00296"/>
</dbReference>
<dbReference type="Proteomes" id="UP000002196">
    <property type="component" value="Chromosome"/>
</dbReference>
<dbReference type="GO" id="GO:0005829">
    <property type="term" value="C:cytosol"/>
    <property type="evidence" value="ECO:0007669"/>
    <property type="project" value="TreeGrafter"/>
</dbReference>
<dbReference type="GO" id="GO:0005524">
    <property type="term" value="F:ATP binding"/>
    <property type="evidence" value="ECO:0007669"/>
    <property type="project" value="UniProtKB-UniRule"/>
</dbReference>
<dbReference type="GO" id="GO:0003921">
    <property type="term" value="F:GMP synthase activity"/>
    <property type="evidence" value="ECO:0007669"/>
    <property type="project" value="InterPro"/>
</dbReference>
<dbReference type="CDD" id="cd01742">
    <property type="entry name" value="GATase1_GMP_Synthase"/>
    <property type="match status" value="1"/>
</dbReference>
<dbReference type="CDD" id="cd01997">
    <property type="entry name" value="GMP_synthase_C"/>
    <property type="match status" value="1"/>
</dbReference>
<dbReference type="FunFam" id="3.30.300.10:FF:000002">
    <property type="entry name" value="GMP synthase [glutamine-hydrolyzing]"/>
    <property type="match status" value="1"/>
</dbReference>
<dbReference type="FunFam" id="3.40.50.620:FF:000001">
    <property type="entry name" value="GMP synthase [glutamine-hydrolyzing]"/>
    <property type="match status" value="1"/>
</dbReference>
<dbReference type="FunFam" id="3.40.50.880:FF:000001">
    <property type="entry name" value="GMP synthase [glutamine-hydrolyzing]"/>
    <property type="match status" value="1"/>
</dbReference>
<dbReference type="Gene3D" id="3.30.300.10">
    <property type="match status" value="1"/>
</dbReference>
<dbReference type="Gene3D" id="3.40.50.880">
    <property type="match status" value="1"/>
</dbReference>
<dbReference type="Gene3D" id="3.40.50.620">
    <property type="entry name" value="HUPs"/>
    <property type="match status" value="1"/>
</dbReference>
<dbReference type="HAMAP" id="MF_00344">
    <property type="entry name" value="GMP_synthase"/>
    <property type="match status" value="1"/>
</dbReference>
<dbReference type="InterPro" id="IPR029062">
    <property type="entry name" value="Class_I_gatase-like"/>
</dbReference>
<dbReference type="InterPro" id="IPR017926">
    <property type="entry name" value="GATASE"/>
</dbReference>
<dbReference type="InterPro" id="IPR001674">
    <property type="entry name" value="GMP_synth_C"/>
</dbReference>
<dbReference type="InterPro" id="IPR004739">
    <property type="entry name" value="GMP_synth_GATase"/>
</dbReference>
<dbReference type="InterPro" id="IPR022955">
    <property type="entry name" value="GMP_synthase"/>
</dbReference>
<dbReference type="InterPro" id="IPR025777">
    <property type="entry name" value="GMPS_ATP_PPase_dom"/>
</dbReference>
<dbReference type="InterPro" id="IPR022310">
    <property type="entry name" value="NAD/GMP_synthase"/>
</dbReference>
<dbReference type="InterPro" id="IPR014729">
    <property type="entry name" value="Rossmann-like_a/b/a_fold"/>
</dbReference>
<dbReference type="NCBIfam" id="TIGR00884">
    <property type="entry name" value="guaA_Cterm"/>
    <property type="match status" value="1"/>
</dbReference>
<dbReference type="NCBIfam" id="TIGR00888">
    <property type="entry name" value="guaA_Nterm"/>
    <property type="match status" value="1"/>
</dbReference>
<dbReference type="NCBIfam" id="NF000848">
    <property type="entry name" value="PRK00074.1"/>
    <property type="match status" value="1"/>
</dbReference>
<dbReference type="PANTHER" id="PTHR11922:SF2">
    <property type="entry name" value="GMP SYNTHASE [GLUTAMINE-HYDROLYZING]"/>
    <property type="match status" value="1"/>
</dbReference>
<dbReference type="PANTHER" id="PTHR11922">
    <property type="entry name" value="GMP SYNTHASE-RELATED"/>
    <property type="match status" value="1"/>
</dbReference>
<dbReference type="Pfam" id="PF00117">
    <property type="entry name" value="GATase"/>
    <property type="match status" value="1"/>
</dbReference>
<dbReference type="Pfam" id="PF00958">
    <property type="entry name" value="GMP_synt_C"/>
    <property type="match status" value="1"/>
</dbReference>
<dbReference type="Pfam" id="PF02540">
    <property type="entry name" value="NAD_synthase"/>
    <property type="match status" value="1"/>
</dbReference>
<dbReference type="PRINTS" id="PR00097">
    <property type="entry name" value="ANTSNTHASEII"/>
</dbReference>
<dbReference type="PRINTS" id="PR00099">
    <property type="entry name" value="CPSGATASE"/>
</dbReference>
<dbReference type="PRINTS" id="PR00096">
    <property type="entry name" value="GATASE"/>
</dbReference>
<dbReference type="SUPFAM" id="SSF52402">
    <property type="entry name" value="Adenine nucleotide alpha hydrolases-like"/>
    <property type="match status" value="1"/>
</dbReference>
<dbReference type="SUPFAM" id="SSF52317">
    <property type="entry name" value="Class I glutamine amidotransferase-like"/>
    <property type="match status" value="1"/>
</dbReference>
<dbReference type="SUPFAM" id="SSF54810">
    <property type="entry name" value="GMP synthetase C-terminal dimerisation domain"/>
    <property type="match status" value="1"/>
</dbReference>
<dbReference type="PROSITE" id="PS51273">
    <property type="entry name" value="GATASE_TYPE_1"/>
    <property type="match status" value="1"/>
</dbReference>
<dbReference type="PROSITE" id="PS51553">
    <property type="entry name" value="GMPS_ATP_PPASE"/>
    <property type="match status" value="1"/>
</dbReference>
<feature type="chain" id="PRO_0000140136" description="GMP synthase [glutamine-hydrolyzing]">
    <location>
        <begin position="1"/>
        <end position="513"/>
    </location>
</feature>
<feature type="domain" description="Glutamine amidotransferase type-1">
    <location>
        <begin position="8"/>
        <end position="198"/>
    </location>
</feature>
<feature type="domain" description="GMPS ATP-PPase">
    <location>
        <begin position="199"/>
        <end position="388"/>
    </location>
</feature>
<feature type="active site" description="Nucleophile" evidence="1">
    <location>
        <position position="85"/>
    </location>
</feature>
<feature type="active site" evidence="1">
    <location>
        <position position="172"/>
    </location>
</feature>
<feature type="active site" evidence="1">
    <location>
        <position position="174"/>
    </location>
</feature>
<feature type="binding site" evidence="1">
    <location>
        <begin position="226"/>
        <end position="232"/>
    </location>
    <ligand>
        <name>ATP</name>
        <dbReference type="ChEBI" id="CHEBI:30616"/>
    </ligand>
</feature>
<comment type="function">
    <text evidence="1">Catalyzes the synthesis of GMP from XMP.</text>
</comment>
<comment type="catalytic activity">
    <reaction>
        <text>XMP + L-glutamine + ATP + H2O = GMP + L-glutamate + AMP + diphosphate + 2 H(+)</text>
        <dbReference type="Rhea" id="RHEA:11680"/>
        <dbReference type="ChEBI" id="CHEBI:15377"/>
        <dbReference type="ChEBI" id="CHEBI:15378"/>
        <dbReference type="ChEBI" id="CHEBI:29985"/>
        <dbReference type="ChEBI" id="CHEBI:30616"/>
        <dbReference type="ChEBI" id="CHEBI:33019"/>
        <dbReference type="ChEBI" id="CHEBI:57464"/>
        <dbReference type="ChEBI" id="CHEBI:58115"/>
        <dbReference type="ChEBI" id="CHEBI:58359"/>
        <dbReference type="ChEBI" id="CHEBI:456215"/>
        <dbReference type="EC" id="6.3.5.2"/>
    </reaction>
</comment>
<comment type="pathway">
    <text>Purine metabolism; GMP biosynthesis; GMP from XMP (L-Gln route): step 1/1.</text>
</comment>
<comment type="subunit">
    <text evidence="1">Homodimer.</text>
</comment>